<gene>
    <name type="primary">lias</name>
</gene>
<reference key="1">
    <citation type="submission" date="2004-06" db="EMBL/GenBank/DDBJ databases">
        <authorList>
            <consortium name="NIH - Xenopus Gene Collection (XGC) project"/>
        </authorList>
    </citation>
    <scope>NUCLEOTIDE SEQUENCE [LARGE SCALE MRNA]</scope>
    <source>
        <tissue>Ovary</tissue>
    </source>
</reference>
<name>LIAS_XENLA</name>
<evidence type="ECO:0000255" key="1">
    <source>
        <dbReference type="HAMAP-Rule" id="MF_03123"/>
    </source>
</evidence>
<evidence type="ECO:0000255" key="2">
    <source>
        <dbReference type="PROSITE-ProRule" id="PRU01266"/>
    </source>
</evidence>
<comment type="function">
    <text evidence="1">Catalyzes the radical-mediated insertion of two sulfur atoms into the C-6 and C-8 positions of the octanoyl moiety bound to the lipoyl domains of lipoate-dependent enzymes, thereby converting the octanoylated domains into lipoylated derivatives.</text>
</comment>
<comment type="catalytic activity">
    <reaction evidence="1">
        <text>[[Fe-S] cluster scaffold protein carrying a second [4Fe-4S](2+) cluster] + N(6)-octanoyl-L-lysyl-[protein] + 2 oxidized [2Fe-2S]-[ferredoxin] + 2 S-adenosyl-L-methionine + 4 H(+) = [[Fe-S] cluster scaffold protein] + N(6)-[(R)-dihydrolipoyl]-L-lysyl-[protein] + 4 Fe(3+) + 2 hydrogen sulfide + 2 5'-deoxyadenosine + 2 L-methionine + 2 reduced [2Fe-2S]-[ferredoxin]</text>
        <dbReference type="Rhea" id="RHEA:16585"/>
        <dbReference type="Rhea" id="RHEA-COMP:9928"/>
        <dbReference type="Rhea" id="RHEA-COMP:10000"/>
        <dbReference type="Rhea" id="RHEA-COMP:10001"/>
        <dbReference type="Rhea" id="RHEA-COMP:10475"/>
        <dbReference type="Rhea" id="RHEA-COMP:14568"/>
        <dbReference type="Rhea" id="RHEA-COMP:14569"/>
        <dbReference type="ChEBI" id="CHEBI:15378"/>
        <dbReference type="ChEBI" id="CHEBI:17319"/>
        <dbReference type="ChEBI" id="CHEBI:29034"/>
        <dbReference type="ChEBI" id="CHEBI:29919"/>
        <dbReference type="ChEBI" id="CHEBI:33722"/>
        <dbReference type="ChEBI" id="CHEBI:33737"/>
        <dbReference type="ChEBI" id="CHEBI:33738"/>
        <dbReference type="ChEBI" id="CHEBI:57844"/>
        <dbReference type="ChEBI" id="CHEBI:59789"/>
        <dbReference type="ChEBI" id="CHEBI:78809"/>
        <dbReference type="ChEBI" id="CHEBI:83100"/>
        <dbReference type="EC" id="2.8.1.8"/>
    </reaction>
</comment>
<comment type="cofactor">
    <cofactor evidence="1">
        <name>[4Fe-4S] cluster</name>
        <dbReference type="ChEBI" id="CHEBI:49883"/>
    </cofactor>
    <text evidence="1">Binds 2 [4Fe-4S] clusters per subunit. One cluster is coordinated with 3 cysteines and an exchangeable S-adenosyl-L-methionine.</text>
</comment>
<comment type="pathway">
    <text evidence="1">Protein modification; protein lipoylation via endogenous pathway; protein N(6)-(lipoyl)lysine from octanoyl-[acyl-carrier-protein]: step 2/2.</text>
</comment>
<comment type="subcellular location">
    <subcellularLocation>
        <location evidence="1">Mitochondrion</location>
    </subcellularLocation>
</comment>
<comment type="miscellaneous">
    <text evidence="1">This protein may be expected to contain an N-terminal transit peptide but none has been predicted.</text>
</comment>
<comment type="similarity">
    <text evidence="1">Belongs to the radical SAM superfamily. Lipoyl synthase family.</text>
</comment>
<keyword id="KW-0004">4Fe-4S</keyword>
<keyword id="KW-0408">Iron</keyword>
<keyword id="KW-0411">Iron-sulfur</keyword>
<keyword id="KW-0479">Metal-binding</keyword>
<keyword id="KW-0496">Mitochondrion</keyword>
<keyword id="KW-1185">Reference proteome</keyword>
<keyword id="KW-0949">S-adenosyl-L-methionine</keyword>
<keyword id="KW-0808">Transferase</keyword>
<sequence length="372" mass="41803">MRQCGLVRAAQLLRTCGLAEWHTPYRALSSLPDEKKELIKNGPDLQDFLSGELVDKSSWAAYKGDLKRQKGERLRLPPWVKTEIPMGKNYNKLKNTLRNLNLHTVCEEARCPNIGECWGGGEYGTATATIMLMGDTCTRGCRFCSVKTARNPPPLDPDEPYNTSKAIAEWGLDYVVLTSVDRDDISDGGAEHIAQTVSMLKERNKTILIECLTPDFRGNMKAVETVAKSGLDVYAHNVETVPALQRHVRDPRANFDQSLNVLKHAKNVRPDLVSKTSIMLGLGETDEQIYSTMKALREAGVDCLTLGQYMQPTKRHLKVEEYITPEKFKYWEKAGNELGFLYTASGPLVRSSYKAGEFFLKNLIEKRKTKAI</sequence>
<accession>Q6GQ48</accession>
<feature type="chain" id="PRO_0000398212" description="Lipoyl synthase, mitochondrial">
    <location>
        <begin position="1"/>
        <end position="372"/>
    </location>
</feature>
<feature type="domain" description="Radical SAM core" evidence="2">
    <location>
        <begin position="122"/>
        <end position="341"/>
    </location>
</feature>
<feature type="binding site" evidence="1">
    <location>
        <position position="106"/>
    </location>
    <ligand>
        <name>[4Fe-4S] cluster</name>
        <dbReference type="ChEBI" id="CHEBI:49883"/>
        <label>1</label>
    </ligand>
</feature>
<feature type="binding site" evidence="1">
    <location>
        <position position="111"/>
    </location>
    <ligand>
        <name>[4Fe-4S] cluster</name>
        <dbReference type="ChEBI" id="CHEBI:49883"/>
        <label>1</label>
    </ligand>
</feature>
<feature type="binding site" evidence="1">
    <location>
        <position position="117"/>
    </location>
    <ligand>
        <name>[4Fe-4S] cluster</name>
        <dbReference type="ChEBI" id="CHEBI:49883"/>
        <label>1</label>
    </ligand>
</feature>
<feature type="binding site" evidence="1">
    <location>
        <position position="137"/>
    </location>
    <ligand>
        <name>[4Fe-4S] cluster</name>
        <dbReference type="ChEBI" id="CHEBI:49883"/>
        <label>2</label>
        <note>4Fe-4S-S-AdoMet</note>
    </ligand>
</feature>
<feature type="binding site" evidence="1">
    <location>
        <position position="141"/>
    </location>
    <ligand>
        <name>[4Fe-4S] cluster</name>
        <dbReference type="ChEBI" id="CHEBI:49883"/>
        <label>2</label>
        <note>4Fe-4S-S-AdoMet</note>
    </ligand>
</feature>
<feature type="binding site" evidence="1">
    <location>
        <position position="144"/>
    </location>
    <ligand>
        <name>[4Fe-4S] cluster</name>
        <dbReference type="ChEBI" id="CHEBI:49883"/>
        <label>2</label>
        <note>4Fe-4S-S-AdoMet</note>
    </ligand>
</feature>
<feature type="binding site" evidence="1">
    <location>
        <position position="352"/>
    </location>
    <ligand>
        <name>[4Fe-4S] cluster</name>
        <dbReference type="ChEBI" id="CHEBI:49883"/>
        <label>1</label>
    </ligand>
</feature>
<dbReference type="EC" id="2.8.1.8" evidence="1"/>
<dbReference type="EMBL" id="BC072900">
    <property type="protein sequence ID" value="AAH72900.1"/>
    <property type="molecule type" value="mRNA"/>
</dbReference>
<dbReference type="RefSeq" id="NP_001085534.1">
    <property type="nucleotide sequence ID" value="NM_001092065.1"/>
</dbReference>
<dbReference type="SMR" id="Q6GQ48"/>
<dbReference type="DNASU" id="443960"/>
<dbReference type="GeneID" id="443960"/>
<dbReference type="KEGG" id="xla:443960"/>
<dbReference type="AGR" id="Xenbase:XB-GENE-6251515"/>
<dbReference type="CTD" id="443960"/>
<dbReference type="Xenbase" id="XB-GENE-6251515">
    <property type="gene designation" value="lias.S"/>
</dbReference>
<dbReference type="OrthoDB" id="3231at2759"/>
<dbReference type="UniPathway" id="UPA00538">
    <property type="reaction ID" value="UER00593"/>
</dbReference>
<dbReference type="Proteomes" id="UP000186698">
    <property type="component" value="Chromosome 1S"/>
</dbReference>
<dbReference type="Bgee" id="443960">
    <property type="expression patterns" value="Expressed in testis and 19 other cell types or tissues"/>
</dbReference>
<dbReference type="GO" id="GO:0005739">
    <property type="term" value="C:mitochondrion"/>
    <property type="evidence" value="ECO:0000318"/>
    <property type="project" value="GO_Central"/>
</dbReference>
<dbReference type="GO" id="GO:0051539">
    <property type="term" value="F:4 iron, 4 sulfur cluster binding"/>
    <property type="evidence" value="ECO:0007669"/>
    <property type="project" value="UniProtKB-UniRule"/>
</dbReference>
<dbReference type="GO" id="GO:0016992">
    <property type="term" value="F:lipoate synthase activity"/>
    <property type="evidence" value="ECO:0000318"/>
    <property type="project" value="GO_Central"/>
</dbReference>
<dbReference type="GO" id="GO:0046872">
    <property type="term" value="F:metal ion binding"/>
    <property type="evidence" value="ECO:0007669"/>
    <property type="project" value="UniProtKB-KW"/>
</dbReference>
<dbReference type="GO" id="GO:0009107">
    <property type="term" value="P:lipoate biosynthetic process"/>
    <property type="evidence" value="ECO:0000318"/>
    <property type="project" value="GO_Central"/>
</dbReference>
<dbReference type="CDD" id="cd01335">
    <property type="entry name" value="Radical_SAM"/>
    <property type="match status" value="1"/>
</dbReference>
<dbReference type="FunFam" id="3.20.20.70:FF:000036">
    <property type="entry name" value="Lipoyl synthase, mitochondrial"/>
    <property type="match status" value="1"/>
</dbReference>
<dbReference type="Gene3D" id="3.20.20.70">
    <property type="entry name" value="Aldolase class I"/>
    <property type="match status" value="1"/>
</dbReference>
<dbReference type="HAMAP" id="MF_00206">
    <property type="entry name" value="Lipoyl_synth"/>
    <property type="match status" value="1"/>
</dbReference>
<dbReference type="InterPro" id="IPR013785">
    <property type="entry name" value="Aldolase_TIM"/>
</dbReference>
<dbReference type="InterPro" id="IPR006638">
    <property type="entry name" value="Elp3/MiaA/NifB-like_rSAM"/>
</dbReference>
<dbReference type="InterPro" id="IPR031691">
    <property type="entry name" value="LIAS_N"/>
</dbReference>
<dbReference type="InterPro" id="IPR003698">
    <property type="entry name" value="Lipoyl_synth"/>
</dbReference>
<dbReference type="InterPro" id="IPR007197">
    <property type="entry name" value="rSAM"/>
</dbReference>
<dbReference type="NCBIfam" id="TIGR00510">
    <property type="entry name" value="lipA"/>
    <property type="match status" value="1"/>
</dbReference>
<dbReference type="NCBIfam" id="NF004019">
    <property type="entry name" value="PRK05481.1"/>
    <property type="match status" value="1"/>
</dbReference>
<dbReference type="NCBIfam" id="NF009544">
    <property type="entry name" value="PRK12928.1"/>
    <property type="match status" value="1"/>
</dbReference>
<dbReference type="PANTHER" id="PTHR10949">
    <property type="entry name" value="LIPOYL SYNTHASE"/>
    <property type="match status" value="1"/>
</dbReference>
<dbReference type="PANTHER" id="PTHR10949:SF0">
    <property type="entry name" value="LIPOYL SYNTHASE, MITOCHONDRIAL"/>
    <property type="match status" value="1"/>
</dbReference>
<dbReference type="Pfam" id="PF16881">
    <property type="entry name" value="LIAS_N"/>
    <property type="match status" value="1"/>
</dbReference>
<dbReference type="Pfam" id="PF04055">
    <property type="entry name" value="Radical_SAM"/>
    <property type="match status" value="1"/>
</dbReference>
<dbReference type="PIRSF" id="PIRSF005963">
    <property type="entry name" value="Lipoyl_synth"/>
    <property type="match status" value="1"/>
</dbReference>
<dbReference type="SFLD" id="SFLDF00271">
    <property type="entry name" value="lipoyl_synthase"/>
    <property type="match status" value="1"/>
</dbReference>
<dbReference type="SFLD" id="SFLDG01058">
    <property type="entry name" value="lipoyl_synthase_like"/>
    <property type="match status" value="1"/>
</dbReference>
<dbReference type="SMART" id="SM00729">
    <property type="entry name" value="Elp3"/>
    <property type="match status" value="1"/>
</dbReference>
<dbReference type="SUPFAM" id="SSF102114">
    <property type="entry name" value="Radical SAM enzymes"/>
    <property type="match status" value="1"/>
</dbReference>
<dbReference type="PROSITE" id="PS51918">
    <property type="entry name" value="RADICAL_SAM"/>
    <property type="match status" value="1"/>
</dbReference>
<organism>
    <name type="scientific">Xenopus laevis</name>
    <name type="common">African clawed frog</name>
    <dbReference type="NCBI Taxonomy" id="8355"/>
    <lineage>
        <taxon>Eukaryota</taxon>
        <taxon>Metazoa</taxon>
        <taxon>Chordata</taxon>
        <taxon>Craniata</taxon>
        <taxon>Vertebrata</taxon>
        <taxon>Euteleostomi</taxon>
        <taxon>Amphibia</taxon>
        <taxon>Batrachia</taxon>
        <taxon>Anura</taxon>
        <taxon>Pipoidea</taxon>
        <taxon>Pipidae</taxon>
        <taxon>Xenopodinae</taxon>
        <taxon>Xenopus</taxon>
        <taxon>Xenopus</taxon>
    </lineage>
</organism>
<protein>
    <recommendedName>
        <fullName evidence="1">Lipoyl synthase, mitochondrial</fullName>
        <ecNumber evidence="1">2.8.1.8</ecNumber>
    </recommendedName>
    <alternativeName>
        <fullName evidence="1">Lipoate synthase</fullName>
        <shortName evidence="1">LS</shortName>
        <shortName evidence="1">Lip-syn</shortName>
    </alternativeName>
    <alternativeName>
        <fullName evidence="1">Lipoic acid synthase</fullName>
    </alternativeName>
</protein>
<proteinExistence type="evidence at transcript level"/>